<reference key="1">
    <citation type="journal article" date="2000" name="Nature">
        <title>Sequence and analysis of chromosome 3 of the plant Arabidopsis thaliana.</title>
        <authorList>
            <person name="Salanoubat M."/>
            <person name="Lemcke K."/>
            <person name="Rieger M."/>
            <person name="Ansorge W."/>
            <person name="Unseld M."/>
            <person name="Fartmann B."/>
            <person name="Valle G."/>
            <person name="Bloecker H."/>
            <person name="Perez-Alonso M."/>
            <person name="Obermaier B."/>
            <person name="Delseny M."/>
            <person name="Boutry M."/>
            <person name="Grivell L.A."/>
            <person name="Mache R."/>
            <person name="Puigdomenech P."/>
            <person name="De Simone V."/>
            <person name="Choisne N."/>
            <person name="Artiguenave F."/>
            <person name="Robert C."/>
            <person name="Brottier P."/>
            <person name="Wincker P."/>
            <person name="Cattolico L."/>
            <person name="Weissenbach J."/>
            <person name="Saurin W."/>
            <person name="Quetier F."/>
            <person name="Schaefer M."/>
            <person name="Mueller-Auer S."/>
            <person name="Gabel C."/>
            <person name="Fuchs M."/>
            <person name="Benes V."/>
            <person name="Wurmbach E."/>
            <person name="Drzonek H."/>
            <person name="Erfle H."/>
            <person name="Jordan N."/>
            <person name="Bangert S."/>
            <person name="Wiedelmann R."/>
            <person name="Kranz H."/>
            <person name="Voss H."/>
            <person name="Holland R."/>
            <person name="Brandt P."/>
            <person name="Nyakatura G."/>
            <person name="Vezzi A."/>
            <person name="D'Angelo M."/>
            <person name="Pallavicini A."/>
            <person name="Toppo S."/>
            <person name="Simionati B."/>
            <person name="Conrad A."/>
            <person name="Hornischer K."/>
            <person name="Kauer G."/>
            <person name="Loehnert T.-H."/>
            <person name="Nordsiek G."/>
            <person name="Reichelt J."/>
            <person name="Scharfe M."/>
            <person name="Schoen O."/>
            <person name="Bargues M."/>
            <person name="Terol J."/>
            <person name="Climent J."/>
            <person name="Navarro P."/>
            <person name="Collado C."/>
            <person name="Perez-Perez A."/>
            <person name="Ottenwaelder B."/>
            <person name="Duchemin D."/>
            <person name="Cooke R."/>
            <person name="Laudie M."/>
            <person name="Berger-Llauro C."/>
            <person name="Purnelle B."/>
            <person name="Masuy D."/>
            <person name="de Haan M."/>
            <person name="Maarse A.C."/>
            <person name="Alcaraz J.-P."/>
            <person name="Cottet A."/>
            <person name="Casacuberta E."/>
            <person name="Monfort A."/>
            <person name="Argiriou A."/>
            <person name="Flores M."/>
            <person name="Liguori R."/>
            <person name="Vitale D."/>
            <person name="Mannhaupt G."/>
            <person name="Haase D."/>
            <person name="Schoof H."/>
            <person name="Rudd S."/>
            <person name="Zaccaria P."/>
            <person name="Mewes H.-W."/>
            <person name="Mayer K.F.X."/>
            <person name="Kaul S."/>
            <person name="Town C.D."/>
            <person name="Koo H.L."/>
            <person name="Tallon L.J."/>
            <person name="Jenkins J."/>
            <person name="Rooney T."/>
            <person name="Rizzo M."/>
            <person name="Walts A."/>
            <person name="Utterback T."/>
            <person name="Fujii C.Y."/>
            <person name="Shea T.P."/>
            <person name="Creasy T.H."/>
            <person name="Haas B."/>
            <person name="Maiti R."/>
            <person name="Wu D."/>
            <person name="Peterson J."/>
            <person name="Van Aken S."/>
            <person name="Pai G."/>
            <person name="Militscher J."/>
            <person name="Sellers P."/>
            <person name="Gill J.E."/>
            <person name="Feldblyum T.V."/>
            <person name="Preuss D."/>
            <person name="Lin X."/>
            <person name="Nierman W.C."/>
            <person name="Salzberg S.L."/>
            <person name="White O."/>
            <person name="Venter J.C."/>
            <person name="Fraser C.M."/>
            <person name="Kaneko T."/>
            <person name="Nakamura Y."/>
            <person name="Sato S."/>
            <person name="Kato T."/>
            <person name="Asamizu E."/>
            <person name="Sasamoto S."/>
            <person name="Kimura T."/>
            <person name="Idesawa K."/>
            <person name="Kawashima K."/>
            <person name="Kishida Y."/>
            <person name="Kiyokawa C."/>
            <person name="Kohara M."/>
            <person name="Matsumoto M."/>
            <person name="Matsuno A."/>
            <person name="Muraki A."/>
            <person name="Nakayama S."/>
            <person name="Nakazaki N."/>
            <person name="Shinpo S."/>
            <person name="Takeuchi C."/>
            <person name="Wada T."/>
            <person name="Watanabe A."/>
            <person name="Yamada M."/>
            <person name="Yasuda M."/>
            <person name="Tabata S."/>
        </authorList>
    </citation>
    <scope>NUCLEOTIDE SEQUENCE [LARGE SCALE GENOMIC DNA]</scope>
    <source>
        <strain>cv. Columbia</strain>
    </source>
</reference>
<reference key="2">
    <citation type="journal article" date="2017" name="Plant J.">
        <title>Araport11: a complete reannotation of the Arabidopsis thaliana reference genome.</title>
        <authorList>
            <person name="Cheng C.Y."/>
            <person name="Krishnakumar V."/>
            <person name="Chan A.P."/>
            <person name="Thibaud-Nissen F."/>
            <person name="Schobel S."/>
            <person name="Town C.D."/>
        </authorList>
    </citation>
    <scope>GENOME REANNOTATION</scope>
    <source>
        <strain>cv. Columbia</strain>
    </source>
</reference>
<reference key="3">
    <citation type="journal article" date="2003" name="Plant Cell">
        <title>Update on the basic helix-loop-helix transcription factor gene family in Arabidopsis thaliana.</title>
        <authorList>
            <person name="Bailey P.C."/>
            <person name="Martin C."/>
            <person name="Toledo-Ortiz G."/>
            <person name="Quail P.H."/>
            <person name="Huq E."/>
            <person name="Heim M.A."/>
            <person name="Jakoby M."/>
            <person name="Werber M."/>
            <person name="Weisshaar B."/>
        </authorList>
    </citation>
    <scope>GENE FAMILY</scope>
    <scope>NOMENCLATURE</scope>
</reference>
<reference key="4">
    <citation type="journal article" date="2006" name="Plant Cell Physiol.">
        <title>Overexpression of PRE1 and its homologous genes activates gibberellin-dependent responses in Arabidopsis thaliana.</title>
        <authorList>
            <person name="Lee S."/>
            <person name="Lee S."/>
            <person name="Yang K.Y."/>
            <person name="Kim Y.M."/>
            <person name="Park S.Y."/>
            <person name="Kim S.Y."/>
            <person name="Soh M.S."/>
        </authorList>
    </citation>
    <scope>FUNCTION</scope>
    <scope>TISSUE SPECIFICITY</scope>
    <scope>INDUCTION</scope>
</reference>
<reference key="5">
    <citation type="journal article" date="2010" name="Plant Cell">
        <title>The Arabidopsis floral homeotic proteins APETALA3 and PISTILLATA negatively regulate the BANQUO genes implicated in light signaling.</title>
        <authorList>
            <person name="Mara C.D."/>
            <person name="Huang T."/>
            <person name="Irish V.F."/>
        </authorList>
    </citation>
    <scope>FUNCTION</scope>
    <scope>INTERACTION WITH HFR1</scope>
    <scope>DISRUPTION PHENOTYPE</scope>
</reference>
<reference key="6">
    <citation type="journal article" date="2012" name="Plant Cell">
        <title>A triantagonistic basic helix-loop-helix system regulates cell elongation in Arabidopsis.</title>
        <authorList>
            <person name="Ikeda M."/>
            <person name="Fujiwara S."/>
            <person name="Mitsuda N."/>
            <person name="Ohme-Takagi M."/>
        </authorList>
    </citation>
    <scope>INTERACTION WITH IBH1</scope>
</reference>
<proteinExistence type="evidence at protein level"/>
<name>PRE4_ARATH</name>
<keyword id="KW-0939">Gibberellin signaling pathway</keyword>
<keyword id="KW-0341">Growth regulation</keyword>
<keyword id="KW-0539">Nucleus</keyword>
<keyword id="KW-1185">Reference proteome</keyword>
<keyword id="KW-0804">Transcription</keyword>
<keyword id="KW-0805">Transcription regulation</keyword>
<comment type="function">
    <text evidence="2 3">Atypical and probable non DNA-binding bHLH transcription factor that integrates multiple signaling pathways to regulate cell elongation and plant development. Regulates light responses by binding and inhibiting the activity of the bHLH transcription factor HFR1, a critical regulator of light signaling and shade avoidance. May have a regulatory role in various aspects of gibberellin-dependent growth and development.</text>
</comment>
<comment type="subunit">
    <text evidence="3 4">Interacts with HFR1 and IBH1.</text>
</comment>
<comment type="interaction">
    <interactant intactId="EBI-15192623">
        <id>F4JCN9</id>
    </interactant>
    <interactant intactId="EBI-15193669">
        <id>O80482</id>
        <label>BHLH149</label>
    </interactant>
    <organismsDiffer>false</organismsDiffer>
    <experiments>3</experiments>
</comment>
<comment type="interaction">
    <interactant intactId="EBI-15192623">
        <id>F4JCN9</id>
    </interactant>
    <interactant intactId="EBI-1640543">
        <id>Q0V7X4</id>
        <label>FIT</label>
    </interactant>
    <organismsDiffer>false</organismsDiffer>
    <experiments>4</experiments>
</comment>
<comment type="subcellular location">
    <subcellularLocation>
        <location evidence="1">Nucleus</location>
    </subcellularLocation>
</comment>
<comment type="tissue specificity">
    <text evidence="2">Expressed in roots, leaves, stems and flowers.</text>
</comment>
<comment type="induction">
    <text evidence="2">Not induced by exogenous gibberellin.</text>
</comment>
<comment type="disruption phenotype">
    <text evidence="3">Pale-green sepals and carpels and decreased chlorophyll levels.</text>
</comment>
<comment type="miscellaneous">
    <text evidence="6">Plants over-expressing PRE4 show long hypocotyls, pale green and slightly narrow leaves, elongated petioles and early flowering. They are not sensitive to the gibberellin inhibitor paclobutrazol during seed germination (PubMed:16527868).</text>
</comment>
<comment type="similarity">
    <text evidence="5">Belongs to the bHLH protein family.</text>
</comment>
<comment type="sequence caution" evidence="5">
    <conflict type="erroneous gene model prediction">
        <sequence resource="EMBL-CDS" id="CAB41854"/>
    </conflict>
</comment>
<protein>
    <recommendedName>
        <fullName>Transcription factor PRE4</fullName>
    </recommendedName>
    <alternativeName>
        <fullName>Basic helix-loop-helix protein 161</fullName>
        <shortName>AtbHLH161</shortName>
        <shortName>bHLH 161</shortName>
    </alternativeName>
    <alternativeName>
        <fullName>Protein BANQUO 3</fullName>
    </alternativeName>
    <alternativeName>
        <fullName>Protein PACLOBUTRAZOL RESISTANCE 4</fullName>
    </alternativeName>
    <alternativeName>
        <fullName>bHLH transcription factor bHLH161</fullName>
    </alternativeName>
</protein>
<gene>
    <name type="primary">PRE4</name>
    <name type="synonym">BHLH161</name>
    <name type="synonym">BNQ3</name>
    <name type="ordered locus">At3g47710</name>
    <name type="ORF">T23J7.40</name>
</gene>
<feature type="chain" id="PRO_0000429085" description="Transcription factor PRE4">
    <location>
        <begin position="1"/>
        <end position="92"/>
    </location>
</feature>
<feature type="domain" description="bHLH" evidence="1">
    <location>
        <begin position="5"/>
        <end position="60"/>
    </location>
</feature>
<sequence length="92" mass="10360">MSSRKSRSRQTGASMITDEQINDLVLQLHRLLPELANNRRSGKVSASRVLQETCSYIRNLSKEVDDLSERLSQLLESTDSAQAALIRSLLMQ</sequence>
<organism>
    <name type="scientific">Arabidopsis thaliana</name>
    <name type="common">Mouse-ear cress</name>
    <dbReference type="NCBI Taxonomy" id="3702"/>
    <lineage>
        <taxon>Eukaryota</taxon>
        <taxon>Viridiplantae</taxon>
        <taxon>Streptophyta</taxon>
        <taxon>Embryophyta</taxon>
        <taxon>Tracheophyta</taxon>
        <taxon>Spermatophyta</taxon>
        <taxon>Magnoliopsida</taxon>
        <taxon>eudicotyledons</taxon>
        <taxon>Gunneridae</taxon>
        <taxon>Pentapetalae</taxon>
        <taxon>rosids</taxon>
        <taxon>malvids</taxon>
        <taxon>Brassicales</taxon>
        <taxon>Brassicaceae</taxon>
        <taxon>Camelineae</taxon>
        <taxon>Arabidopsis</taxon>
    </lineage>
</organism>
<accession>F4JCN9</accession>
<accession>Q9STU2</accession>
<dbReference type="EMBL" id="AL049746">
    <property type="protein sequence ID" value="CAB41854.1"/>
    <property type="status" value="ALT_SEQ"/>
    <property type="molecule type" value="Genomic_DNA"/>
</dbReference>
<dbReference type="EMBL" id="CP002686">
    <property type="protein sequence ID" value="AEE78321.1"/>
    <property type="molecule type" value="Genomic_DNA"/>
</dbReference>
<dbReference type="PIR" id="T07710">
    <property type="entry name" value="T07710"/>
</dbReference>
<dbReference type="RefSeq" id="NP_190355.2">
    <property type="nucleotide sequence ID" value="NM_114639.3"/>
</dbReference>
<dbReference type="SMR" id="F4JCN9"/>
<dbReference type="BioGRID" id="9245">
    <property type="interactions" value="9"/>
</dbReference>
<dbReference type="FunCoup" id="F4JCN9">
    <property type="interactions" value="16"/>
</dbReference>
<dbReference type="IntAct" id="F4JCN9">
    <property type="interactions" value="9"/>
</dbReference>
<dbReference type="STRING" id="3702.F4JCN9"/>
<dbReference type="PaxDb" id="3702-AT3G47710.1"/>
<dbReference type="ProteomicsDB" id="226410"/>
<dbReference type="EnsemblPlants" id="AT3G47710.1">
    <property type="protein sequence ID" value="AT3G47710.1"/>
    <property type="gene ID" value="AT3G47710"/>
</dbReference>
<dbReference type="GeneID" id="823925"/>
<dbReference type="Gramene" id="AT3G47710.1">
    <property type="protein sequence ID" value="AT3G47710.1"/>
    <property type="gene ID" value="AT3G47710"/>
</dbReference>
<dbReference type="KEGG" id="ath:AT3G47710"/>
<dbReference type="Araport" id="AT3G47710"/>
<dbReference type="TAIR" id="AT3G47710">
    <property type="gene designation" value="BNQ3"/>
</dbReference>
<dbReference type="eggNOG" id="ENOG502S4KP">
    <property type="taxonomic scope" value="Eukaryota"/>
</dbReference>
<dbReference type="HOGENOM" id="CLU_183267_0_0_1"/>
<dbReference type="InParanoid" id="F4JCN9"/>
<dbReference type="OMA" id="ETCTHIM"/>
<dbReference type="PRO" id="PR:F4JCN9"/>
<dbReference type="Proteomes" id="UP000006548">
    <property type="component" value="Chromosome 3"/>
</dbReference>
<dbReference type="ExpressionAtlas" id="F4JCN9">
    <property type="expression patterns" value="baseline and differential"/>
</dbReference>
<dbReference type="GO" id="GO:0005634">
    <property type="term" value="C:nucleus"/>
    <property type="evidence" value="ECO:0007669"/>
    <property type="project" value="UniProtKB-SubCell"/>
</dbReference>
<dbReference type="GO" id="GO:0003700">
    <property type="term" value="F:DNA-binding transcription factor activity"/>
    <property type="evidence" value="ECO:0000250"/>
    <property type="project" value="TAIR"/>
</dbReference>
<dbReference type="GO" id="GO:0046983">
    <property type="term" value="F:protein dimerization activity"/>
    <property type="evidence" value="ECO:0007669"/>
    <property type="project" value="InterPro"/>
</dbReference>
<dbReference type="GO" id="GO:0009740">
    <property type="term" value="P:gibberellic acid mediated signaling pathway"/>
    <property type="evidence" value="ECO:0007669"/>
    <property type="project" value="UniProtKB-KW"/>
</dbReference>
<dbReference type="GO" id="GO:0009640">
    <property type="term" value="P:photomorphogenesis"/>
    <property type="evidence" value="ECO:0000315"/>
    <property type="project" value="TAIR"/>
</dbReference>
<dbReference type="GO" id="GO:0040008">
    <property type="term" value="P:regulation of growth"/>
    <property type="evidence" value="ECO:0007669"/>
    <property type="project" value="InterPro"/>
</dbReference>
<dbReference type="GO" id="GO:0048510">
    <property type="term" value="P:regulation of timing of transition from vegetative to reproductive phase"/>
    <property type="evidence" value="ECO:0000315"/>
    <property type="project" value="TAIR"/>
</dbReference>
<dbReference type="CDD" id="cd11442">
    <property type="entry name" value="bHLH_AtPRE_like"/>
    <property type="match status" value="1"/>
</dbReference>
<dbReference type="Gene3D" id="4.10.280.10">
    <property type="entry name" value="Helix-loop-helix DNA-binding domain"/>
    <property type="match status" value="1"/>
</dbReference>
<dbReference type="InterPro" id="IPR011598">
    <property type="entry name" value="bHLH_dom"/>
</dbReference>
<dbReference type="InterPro" id="IPR036638">
    <property type="entry name" value="HLH_DNA-bd_sf"/>
</dbReference>
<dbReference type="InterPro" id="IPR044293">
    <property type="entry name" value="PRE"/>
</dbReference>
<dbReference type="PANTHER" id="PTHR46446">
    <property type="entry name" value="TRANSCRIPTION FACTOR PRE"/>
    <property type="match status" value="1"/>
</dbReference>
<dbReference type="PANTHER" id="PTHR46446:SF17">
    <property type="entry name" value="TRANSCRIPTION FACTOR PRE4"/>
    <property type="match status" value="1"/>
</dbReference>
<dbReference type="Pfam" id="PF23174">
    <property type="entry name" value="bHLH_ILI"/>
    <property type="match status" value="1"/>
</dbReference>
<dbReference type="SUPFAM" id="SSF47459">
    <property type="entry name" value="HLH, helix-loop-helix DNA-binding domain"/>
    <property type="match status" value="1"/>
</dbReference>
<dbReference type="PROSITE" id="PS50888">
    <property type="entry name" value="BHLH"/>
    <property type="match status" value="1"/>
</dbReference>
<evidence type="ECO:0000255" key="1">
    <source>
        <dbReference type="PROSITE-ProRule" id="PRU00981"/>
    </source>
</evidence>
<evidence type="ECO:0000269" key="2">
    <source>
    </source>
</evidence>
<evidence type="ECO:0000269" key="3">
    <source>
    </source>
</evidence>
<evidence type="ECO:0000269" key="4">
    <source>
    </source>
</evidence>
<evidence type="ECO:0000305" key="5"/>
<evidence type="ECO:0000305" key="6">
    <source>
    </source>
</evidence>